<accession>Q9LPN5</accession>
<accession>Q9CAF3</accession>
<name>VP601_ARATH</name>
<comment type="function">
    <text evidence="7">Probable peripherally associated component of the endosomal sorting required for transport complex III (ESCRT-III) which is involved in multivesicular bodies (MVBs) formation and sorting of endosomal cargo proteins into MVBs.</text>
</comment>
<comment type="subunit">
    <text evidence="3 4">Interacts with SKD1/VPS4 and LIP5 (PubMed:20663085). Interacts with VPS2.2 (PubMed:22010978).</text>
</comment>
<comment type="subcellular location">
    <subcellularLocation>
        <location evidence="3">Endosome</location>
        <location evidence="3">Multivesicular body membrane</location>
        <topology evidence="6">Peripheral membrane protein</topology>
    </subcellularLocation>
    <text evidence="3">Localized in multivesicular body when associated with SKD1.</text>
</comment>
<comment type="alternative products">
    <event type="alternative splicing"/>
    <isoform>
        <id>Q9LPN5-1</id>
        <name>1</name>
        <sequence type="displayed"/>
    </isoform>
    <text evidence="6">Additional isoforms seem to exist.</text>
</comment>
<comment type="similarity">
    <text evidence="6">Belongs to the SNF7 family.</text>
</comment>
<comment type="sequence caution" evidence="6">
    <conflict type="erroneous gene model prediction">
        <sequence resource="EMBL-CDS" id="AAG51378"/>
    </conflict>
</comment>
<dbReference type="EMBL" id="AC011560">
    <property type="protein sequence ID" value="AAG51378.1"/>
    <property type="status" value="ALT_SEQ"/>
    <property type="molecule type" value="Genomic_DNA"/>
</dbReference>
<dbReference type="EMBL" id="AC013428">
    <property type="protein sequence ID" value="AAF76370.1"/>
    <property type="molecule type" value="Genomic_DNA"/>
</dbReference>
<dbReference type="EMBL" id="CP002686">
    <property type="protein sequence ID" value="AEE74937.1"/>
    <property type="molecule type" value="Genomic_DNA"/>
</dbReference>
<dbReference type="EMBL" id="BT005859">
    <property type="protein sequence ID" value="AAO64794.1"/>
    <property type="molecule type" value="mRNA"/>
</dbReference>
<dbReference type="EMBL" id="AK228223">
    <property type="protein sequence ID" value="BAF00173.1"/>
    <property type="molecule type" value="mRNA"/>
</dbReference>
<dbReference type="RefSeq" id="NP_187675.2">
    <molecule id="Q9LPN5-1"/>
    <property type="nucleotide sequence ID" value="NM_111900.5"/>
</dbReference>
<dbReference type="SMR" id="Q9LPN5"/>
<dbReference type="FunCoup" id="Q9LPN5">
    <property type="interactions" value="4699"/>
</dbReference>
<dbReference type="IntAct" id="Q9LPN5">
    <property type="interactions" value="259"/>
</dbReference>
<dbReference type="STRING" id="3702.Q9LPN5"/>
<dbReference type="TCDB" id="3.A.31.1.2">
    <property type="family name" value="the endosomal sorting complexes required for transport iii (escrt-iii) family"/>
</dbReference>
<dbReference type="PaxDb" id="3702-AT3G10640.1"/>
<dbReference type="ProteomicsDB" id="242447">
    <molecule id="Q9LPN5-1"/>
</dbReference>
<dbReference type="EnsemblPlants" id="AT3G10640.1">
    <molecule id="Q9LPN5-1"/>
    <property type="protein sequence ID" value="AT3G10640.1"/>
    <property type="gene ID" value="AT3G10640"/>
</dbReference>
<dbReference type="Gramene" id="AT3G10640.1">
    <molecule id="Q9LPN5-1"/>
    <property type="protein sequence ID" value="AT3G10640.1"/>
    <property type="gene ID" value="AT3G10640"/>
</dbReference>
<dbReference type="KEGG" id="ath:AT3G10640"/>
<dbReference type="Araport" id="AT3G10640"/>
<dbReference type="TAIR" id="AT3G10640">
    <property type="gene designation" value="VPS60.1"/>
</dbReference>
<dbReference type="eggNOG" id="KOG1655">
    <property type="taxonomic scope" value="Eukaryota"/>
</dbReference>
<dbReference type="HOGENOM" id="CLU_079409_0_0_1"/>
<dbReference type="InParanoid" id="Q9LPN5"/>
<dbReference type="OMA" id="LVWIINA"/>
<dbReference type="OrthoDB" id="3973241at2759"/>
<dbReference type="PhylomeDB" id="Q9LPN5"/>
<dbReference type="PRO" id="PR:Q9LPN5"/>
<dbReference type="Proteomes" id="UP000006548">
    <property type="component" value="Chromosome 3"/>
</dbReference>
<dbReference type="ExpressionAtlas" id="Q9LPN5">
    <property type="expression patterns" value="baseline and differential"/>
</dbReference>
<dbReference type="GO" id="GO:0005771">
    <property type="term" value="C:multivesicular body"/>
    <property type="evidence" value="ECO:0000314"/>
    <property type="project" value="UniProtKB"/>
</dbReference>
<dbReference type="GO" id="GO:0032585">
    <property type="term" value="C:multivesicular body membrane"/>
    <property type="evidence" value="ECO:0007669"/>
    <property type="project" value="UniProtKB-SubCell"/>
</dbReference>
<dbReference type="GO" id="GO:0015031">
    <property type="term" value="P:protein transport"/>
    <property type="evidence" value="ECO:0007669"/>
    <property type="project" value="UniProtKB-KW"/>
</dbReference>
<dbReference type="GO" id="GO:0007034">
    <property type="term" value="P:vacuolar transport"/>
    <property type="evidence" value="ECO:0007669"/>
    <property type="project" value="InterPro"/>
</dbReference>
<dbReference type="Gene3D" id="6.10.250.1710">
    <property type="match status" value="1"/>
</dbReference>
<dbReference type="Gene3D" id="1.10.287.1060">
    <property type="entry name" value="ESAT-6-like"/>
    <property type="match status" value="1"/>
</dbReference>
<dbReference type="InterPro" id="IPR005024">
    <property type="entry name" value="Snf7_fam"/>
</dbReference>
<dbReference type="PANTHER" id="PTHR22761">
    <property type="entry name" value="CHARGED MULTIVESICULAR BODY PROTEIN"/>
    <property type="match status" value="1"/>
</dbReference>
<dbReference type="PANTHER" id="PTHR22761:SF12">
    <property type="entry name" value="CHARGED MULTIVESICULAR BODY PROTEIN 5"/>
    <property type="match status" value="1"/>
</dbReference>
<dbReference type="Pfam" id="PF03357">
    <property type="entry name" value="Snf7"/>
    <property type="match status" value="1"/>
</dbReference>
<proteinExistence type="evidence at protein level"/>
<gene>
    <name evidence="6" type="primary">VPS60-1</name>
    <name evidence="5" type="synonym">VPS60A</name>
    <name evidence="8" type="ordered locus">At3g10640</name>
    <name evidence="10" type="ORF">F13M14.7</name>
    <name evidence="9" type="ORF">F18K10.26</name>
</gene>
<organism>
    <name type="scientific">Arabidopsis thaliana</name>
    <name type="common">Mouse-ear cress</name>
    <dbReference type="NCBI Taxonomy" id="3702"/>
    <lineage>
        <taxon>Eukaryota</taxon>
        <taxon>Viridiplantae</taxon>
        <taxon>Streptophyta</taxon>
        <taxon>Embryophyta</taxon>
        <taxon>Tracheophyta</taxon>
        <taxon>Spermatophyta</taxon>
        <taxon>Magnoliopsida</taxon>
        <taxon>eudicotyledons</taxon>
        <taxon>Gunneridae</taxon>
        <taxon>Pentapetalae</taxon>
        <taxon>rosids</taxon>
        <taxon>malvids</taxon>
        <taxon>Brassicales</taxon>
        <taxon>Brassicaceae</taxon>
        <taxon>Camelineae</taxon>
        <taxon>Arabidopsis</taxon>
    </lineage>
</organism>
<keyword id="KW-0025">Alternative splicing</keyword>
<keyword id="KW-0175">Coiled coil</keyword>
<keyword id="KW-0967">Endosome</keyword>
<keyword id="KW-0472">Membrane</keyword>
<keyword id="KW-0653">Protein transport</keyword>
<keyword id="KW-1185">Reference proteome</keyword>
<keyword id="KW-0813">Transport</keyword>
<sequence>MRRVFGAKKNTEPPPSIQDASDRINKRGDSVEDKIKKLDVELCKYKEQLKKTRPGPAQEAVKARAMRVLKQKKMYEGQRDMLYNQTFNLDQVSFAAEGLKDAQQTMTALKSANKELKGMMKTVKIQDIDNLQDEMMDLMDVSSEIQESLGRSYNIPDGLDEDDLMGELDALEADMGNETEADGMPSYLQPDTETDYDSELNLPAAPTGHNGAPHGRAQAEDEFGLPAVPRASLRG</sequence>
<protein>
    <recommendedName>
        <fullName evidence="6">Vacuolar protein sorting-associated protein 60.1</fullName>
    </recommendedName>
</protein>
<evidence type="ECO:0000255" key="1"/>
<evidence type="ECO:0000256" key="2">
    <source>
        <dbReference type="SAM" id="MobiDB-lite"/>
    </source>
</evidence>
<evidence type="ECO:0000269" key="3">
    <source>
    </source>
</evidence>
<evidence type="ECO:0000269" key="4">
    <source>
    </source>
</evidence>
<evidence type="ECO:0000303" key="5">
    <source>
    </source>
</evidence>
<evidence type="ECO:0000305" key="6"/>
<evidence type="ECO:0000305" key="7">
    <source>
    </source>
</evidence>
<evidence type="ECO:0000312" key="8">
    <source>
        <dbReference type="Araport" id="AT3G10640"/>
    </source>
</evidence>
<evidence type="ECO:0000312" key="9">
    <source>
        <dbReference type="EMBL" id="AAF76370.1"/>
    </source>
</evidence>
<evidence type="ECO:0000312" key="10">
    <source>
        <dbReference type="EMBL" id="AAG51378.1"/>
    </source>
</evidence>
<reference key="1">
    <citation type="journal article" date="2000" name="Nature">
        <title>Sequence and analysis of chromosome 3 of the plant Arabidopsis thaliana.</title>
        <authorList>
            <person name="Salanoubat M."/>
            <person name="Lemcke K."/>
            <person name="Rieger M."/>
            <person name="Ansorge W."/>
            <person name="Unseld M."/>
            <person name="Fartmann B."/>
            <person name="Valle G."/>
            <person name="Bloecker H."/>
            <person name="Perez-Alonso M."/>
            <person name="Obermaier B."/>
            <person name="Delseny M."/>
            <person name="Boutry M."/>
            <person name="Grivell L.A."/>
            <person name="Mache R."/>
            <person name="Puigdomenech P."/>
            <person name="De Simone V."/>
            <person name="Choisne N."/>
            <person name="Artiguenave F."/>
            <person name="Robert C."/>
            <person name="Brottier P."/>
            <person name="Wincker P."/>
            <person name="Cattolico L."/>
            <person name="Weissenbach J."/>
            <person name="Saurin W."/>
            <person name="Quetier F."/>
            <person name="Schaefer M."/>
            <person name="Mueller-Auer S."/>
            <person name="Gabel C."/>
            <person name="Fuchs M."/>
            <person name="Benes V."/>
            <person name="Wurmbach E."/>
            <person name="Drzonek H."/>
            <person name="Erfle H."/>
            <person name="Jordan N."/>
            <person name="Bangert S."/>
            <person name="Wiedelmann R."/>
            <person name="Kranz H."/>
            <person name="Voss H."/>
            <person name="Holland R."/>
            <person name="Brandt P."/>
            <person name="Nyakatura G."/>
            <person name="Vezzi A."/>
            <person name="D'Angelo M."/>
            <person name="Pallavicini A."/>
            <person name="Toppo S."/>
            <person name="Simionati B."/>
            <person name="Conrad A."/>
            <person name="Hornischer K."/>
            <person name="Kauer G."/>
            <person name="Loehnert T.-H."/>
            <person name="Nordsiek G."/>
            <person name="Reichelt J."/>
            <person name="Scharfe M."/>
            <person name="Schoen O."/>
            <person name="Bargues M."/>
            <person name="Terol J."/>
            <person name="Climent J."/>
            <person name="Navarro P."/>
            <person name="Collado C."/>
            <person name="Perez-Perez A."/>
            <person name="Ottenwaelder B."/>
            <person name="Duchemin D."/>
            <person name="Cooke R."/>
            <person name="Laudie M."/>
            <person name="Berger-Llauro C."/>
            <person name="Purnelle B."/>
            <person name="Masuy D."/>
            <person name="de Haan M."/>
            <person name="Maarse A.C."/>
            <person name="Alcaraz J.-P."/>
            <person name="Cottet A."/>
            <person name="Casacuberta E."/>
            <person name="Monfort A."/>
            <person name="Argiriou A."/>
            <person name="Flores M."/>
            <person name="Liguori R."/>
            <person name="Vitale D."/>
            <person name="Mannhaupt G."/>
            <person name="Haase D."/>
            <person name="Schoof H."/>
            <person name="Rudd S."/>
            <person name="Zaccaria P."/>
            <person name="Mewes H.-W."/>
            <person name="Mayer K.F.X."/>
            <person name="Kaul S."/>
            <person name="Town C.D."/>
            <person name="Koo H.L."/>
            <person name="Tallon L.J."/>
            <person name="Jenkins J."/>
            <person name="Rooney T."/>
            <person name="Rizzo M."/>
            <person name="Walts A."/>
            <person name="Utterback T."/>
            <person name="Fujii C.Y."/>
            <person name="Shea T.P."/>
            <person name="Creasy T.H."/>
            <person name="Haas B."/>
            <person name="Maiti R."/>
            <person name="Wu D."/>
            <person name="Peterson J."/>
            <person name="Van Aken S."/>
            <person name="Pai G."/>
            <person name="Militscher J."/>
            <person name="Sellers P."/>
            <person name="Gill J.E."/>
            <person name="Feldblyum T.V."/>
            <person name="Preuss D."/>
            <person name="Lin X."/>
            <person name="Nierman W.C."/>
            <person name="Salzberg S.L."/>
            <person name="White O."/>
            <person name="Venter J.C."/>
            <person name="Fraser C.M."/>
            <person name="Kaneko T."/>
            <person name="Nakamura Y."/>
            <person name="Sato S."/>
            <person name="Kato T."/>
            <person name="Asamizu E."/>
            <person name="Sasamoto S."/>
            <person name="Kimura T."/>
            <person name="Idesawa K."/>
            <person name="Kawashima K."/>
            <person name="Kishida Y."/>
            <person name="Kiyokawa C."/>
            <person name="Kohara M."/>
            <person name="Matsumoto M."/>
            <person name="Matsuno A."/>
            <person name="Muraki A."/>
            <person name="Nakayama S."/>
            <person name="Nakazaki N."/>
            <person name="Shinpo S."/>
            <person name="Takeuchi C."/>
            <person name="Wada T."/>
            <person name="Watanabe A."/>
            <person name="Yamada M."/>
            <person name="Yasuda M."/>
            <person name="Tabata S."/>
        </authorList>
    </citation>
    <scope>NUCLEOTIDE SEQUENCE [LARGE SCALE GENOMIC DNA]</scope>
    <source>
        <strain>cv. Columbia</strain>
    </source>
</reference>
<reference key="2">
    <citation type="journal article" date="2017" name="Plant J.">
        <title>Araport11: a complete reannotation of the Arabidopsis thaliana reference genome.</title>
        <authorList>
            <person name="Cheng C.Y."/>
            <person name="Krishnakumar V."/>
            <person name="Chan A.P."/>
            <person name="Thibaud-Nissen F."/>
            <person name="Schobel S."/>
            <person name="Town C.D."/>
        </authorList>
    </citation>
    <scope>GENOME REANNOTATION</scope>
    <source>
        <strain>cv. Columbia</strain>
    </source>
</reference>
<reference key="3">
    <citation type="journal article" date="2003" name="Science">
        <title>Empirical analysis of transcriptional activity in the Arabidopsis genome.</title>
        <authorList>
            <person name="Yamada K."/>
            <person name="Lim J."/>
            <person name="Dale J.M."/>
            <person name="Chen H."/>
            <person name="Shinn P."/>
            <person name="Palm C.J."/>
            <person name="Southwick A.M."/>
            <person name="Wu H.C."/>
            <person name="Kim C.J."/>
            <person name="Nguyen M."/>
            <person name="Pham P.K."/>
            <person name="Cheuk R.F."/>
            <person name="Karlin-Newmann G."/>
            <person name="Liu S.X."/>
            <person name="Lam B."/>
            <person name="Sakano H."/>
            <person name="Wu T."/>
            <person name="Yu G."/>
            <person name="Miranda M."/>
            <person name="Quach H.L."/>
            <person name="Tripp M."/>
            <person name="Chang C.H."/>
            <person name="Lee J.M."/>
            <person name="Toriumi M.J."/>
            <person name="Chan M.M."/>
            <person name="Tang C.C."/>
            <person name="Onodera C.S."/>
            <person name="Deng J.M."/>
            <person name="Akiyama K."/>
            <person name="Ansari Y."/>
            <person name="Arakawa T."/>
            <person name="Banh J."/>
            <person name="Banno F."/>
            <person name="Bowser L."/>
            <person name="Brooks S.Y."/>
            <person name="Carninci P."/>
            <person name="Chao Q."/>
            <person name="Choy N."/>
            <person name="Enju A."/>
            <person name="Goldsmith A.D."/>
            <person name="Gurjal M."/>
            <person name="Hansen N.F."/>
            <person name="Hayashizaki Y."/>
            <person name="Johnson-Hopson C."/>
            <person name="Hsuan V.W."/>
            <person name="Iida K."/>
            <person name="Karnes M."/>
            <person name="Khan S."/>
            <person name="Koesema E."/>
            <person name="Ishida J."/>
            <person name="Jiang P.X."/>
            <person name="Jones T."/>
            <person name="Kawai J."/>
            <person name="Kamiya A."/>
            <person name="Meyers C."/>
            <person name="Nakajima M."/>
            <person name="Narusaka M."/>
            <person name="Seki M."/>
            <person name="Sakurai T."/>
            <person name="Satou M."/>
            <person name="Tamse R."/>
            <person name="Vaysberg M."/>
            <person name="Wallender E.K."/>
            <person name="Wong C."/>
            <person name="Yamamura Y."/>
            <person name="Yuan S."/>
            <person name="Shinozaki K."/>
            <person name="Davis R.W."/>
            <person name="Theologis A."/>
            <person name="Ecker J.R."/>
        </authorList>
    </citation>
    <scope>NUCLEOTIDE SEQUENCE [LARGE SCALE MRNA]</scope>
    <source>
        <strain>cv. Columbia</strain>
    </source>
</reference>
<reference key="4">
    <citation type="submission" date="2006-07" db="EMBL/GenBank/DDBJ databases">
        <title>Large-scale analysis of RIKEN Arabidopsis full-length (RAFL) cDNAs.</title>
        <authorList>
            <person name="Totoki Y."/>
            <person name="Seki M."/>
            <person name="Ishida J."/>
            <person name="Nakajima M."/>
            <person name="Enju A."/>
            <person name="Kamiya A."/>
            <person name="Narusaka M."/>
            <person name="Shin-i T."/>
            <person name="Nakagawa M."/>
            <person name="Sakamoto N."/>
            <person name="Oishi K."/>
            <person name="Kohara Y."/>
            <person name="Kobayashi M."/>
            <person name="Toyoda A."/>
            <person name="Sakaki Y."/>
            <person name="Sakurai T."/>
            <person name="Iida K."/>
            <person name="Akiyama K."/>
            <person name="Satou M."/>
            <person name="Toyoda T."/>
            <person name="Konagaya A."/>
            <person name="Carninci P."/>
            <person name="Kawai J."/>
            <person name="Hayashizaki Y."/>
            <person name="Shinozaki K."/>
        </authorList>
    </citation>
    <scope>NUCLEOTIDE SEQUENCE [LARGE SCALE MRNA]</scope>
    <source>
        <strain>cv. Columbia</strain>
    </source>
</reference>
<reference key="5">
    <citation type="journal article" date="2006" name="Trends Plant Sci.">
        <title>Exploring the ESCRTing machinery in eukaryotes.</title>
        <authorList>
            <person name="Winter V."/>
            <person name="Hauser M.-T."/>
        </authorList>
    </citation>
    <scope>IDENTIFICATION</scope>
    <scope>REVIEW</scope>
</reference>
<reference key="6">
    <citation type="journal article" date="2010" name="Plant J.">
        <title>The AAA-type ATPase AtSKD1 contributes to vacuolar maintenance of Arabidopsis thaliana.</title>
        <authorList>
            <person name="Shahriari M."/>
            <person name="Keshavaiah C."/>
            <person name="Scheuring D."/>
            <person name="Sabovljevic A."/>
            <person name="Pimpl P."/>
            <person name="Haeusler R.E."/>
            <person name="Huelskamp M."/>
            <person name="Schellmann S."/>
        </authorList>
    </citation>
    <scope>INTERACTION WITH SKD1 AND LIP5</scope>
    <scope>SUBCELLULAR LOCATION</scope>
    <source>
        <strain>cv. Columbia</strain>
    </source>
</reference>
<reference key="7">
    <citation type="journal article" date="2011" name="Front. Plant Sci.">
        <title>Protein-protein interaction network and subcellular localization of the Arabidopsis thaliana ESCRT machinery.</title>
        <authorList>
            <person name="Richardson L.G."/>
            <person name="Howard A.S."/>
            <person name="Khuu N."/>
            <person name="Gidda S.K."/>
            <person name="McCartney A."/>
            <person name="Morphy B.J."/>
            <person name="Mullen R.T."/>
        </authorList>
    </citation>
    <scope>GENE FAMILY</scope>
    <scope>NOMENCLATURE</scope>
</reference>
<reference key="8">
    <citation type="journal article" date="2012" name="J. Proteome Res.">
        <title>Interactome of the plant-specific ESCRT-III component AtVPS2.2 in Arabidopsis thaliana.</title>
        <authorList>
            <person name="Ibl V."/>
            <person name="Csaszar E."/>
            <person name="Schlager N."/>
            <person name="Neubert S."/>
            <person name="Spitzer C."/>
            <person name="Hauser M.T."/>
        </authorList>
    </citation>
    <scope>INTERACTION WITH VPS2.2</scope>
</reference>
<feature type="chain" id="PRO_0000440685" description="Vacuolar protein sorting-associated protein 60.1">
    <location>
        <begin position="1"/>
        <end position="235"/>
    </location>
</feature>
<feature type="region of interest" description="Disordered" evidence="2">
    <location>
        <begin position="1"/>
        <end position="29"/>
    </location>
</feature>
<feature type="region of interest" description="Disordered" evidence="2">
    <location>
        <begin position="175"/>
        <end position="235"/>
    </location>
</feature>
<feature type="coiled-coil region" evidence="1">
    <location>
        <begin position="99"/>
        <end position="148"/>
    </location>
</feature>
<feature type="compositionally biased region" description="Basic and acidic residues" evidence="2">
    <location>
        <begin position="20"/>
        <end position="29"/>
    </location>
</feature>